<sequence length="65" mass="7306">MSETITVNCPTCGKTVVWGEISPFRPFCSKRCQLIDLGEWAAEEKRIPSSGDLSESDDWSEEPKQ</sequence>
<evidence type="ECO:0000255" key="1">
    <source>
        <dbReference type="HAMAP-Rule" id="MF_00649"/>
    </source>
</evidence>
<evidence type="ECO:0000256" key="2">
    <source>
        <dbReference type="SAM" id="MobiDB-lite"/>
    </source>
</evidence>
<keyword id="KW-0479">Metal-binding</keyword>
<keyword id="KW-0862">Zinc</keyword>
<accession>Q0T897</accession>
<gene>
    <name evidence="1" type="primary">yacG</name>
    <name type="ordered locus">SFV_0093</name>
</gene>
<comment type="function">
    <text evidence="1">Inhibits all the catalytic activities of DNA gyrase by preventing its interaction with DNA. Acts by binding directly to the C-terminal domain of GyrB, which probably disrupts DNA binding by the gyrase.</text>
</comment>
<comment type="cofactor">
    <cofactor evidence="1">
        <name>Zn(2+)</name>
        <dbReference type="ChEBI" id="CHEBI:29105"/>
    </cofactor>
    <text evidence="1">Binds 1 zinc ion.</text>
</comment>
<comment type="subunit">
    <text evidence="1">Interacts with GyrB.</text>
</comment>
<comment type="similarity">
    <text evidence="1">Belongs to the DNA gyrase inhibitor YacG family.</text>
</comment>
<feature type="chain" id="PRO_1000056999" description="DNA gyrase inhibitor YacG">
    <location>
        <begin position="1"/>
        <end position="65"/>
    </location>
</feature>
<feature type="region of interest" description="Disordered" evidence="2">
    <location>
        <begin position="45"/>
        <end position="65"/>
    </location>
</feature>
<feature type="compositionally biased region" description="Acidic residues" evidence="2">
    <location>
        <begin position="54"/>
        <end position="65"/>
    </location>
</feature>
<feature type="binding site" evidence="1">
    <location>
        <position position="9"/>
    </location>
    <ligand>
        <name>Zn(2+)</name>
        <dbReference type="ChEBI" id="CHEBI:29105"/>
    </ligand>
</feature>
<feature type="binding site" evidence="1">
    <location>
        <position position="12"/>
    </location>
    <ligand>
        <name>Zn(2+)</name>
        <dbReference type="ChEBI" id="CHEBI:29105"/>
    </ligand>
</feature>
<feature type="binding site" evidence="1">
    <location>
        <position position="28"/>
    </location>
    <ligand>
        <name>Zn(2+)</name>
        <dbReference type="ChEBI" id="CHEBI:29105"/>
    </ligand>
</feature>
<feature type="binding site" evidence="1">
    <location>
        <position position="32"/>
    </location>
    <ligand>
        <name>Zn(2+)</name>
        <dbReference type="ChEBI" id="CHEBI:29105"/>
    </ligand>
</feature>
<protein>
    <recommendedName>
        <fullName evidence="1">DNA gyrase inhibitor YacG</fullName>
    </recommendedName>
</protein>
<reference key="1">
    <citation type="journal article" date="2006" name="BMC Genomics">
        <title>Complete genome sequence of Shigella flexneri 5b and comparison with Shigella flexneri 2a.</title>
        <authorList>
            <person name="Nie H."/>
            <person name="Yang F."/>
            <person name="Zhang X."/>
            <person name="Yang J."/>
            <person name="Chen L."/>
            <person name="Wang J."/>
            <person name="Xiong Z."/>
            <person name="Peng J."/>
            <person name="Sun L."/>
            <person name="Dong J."/>
            <person name="Xue Y."/>
            <person name="Xu X."/>
            <person name="Chen S."/>
            <person name="Yao Z."/>
            <person name="Shen Y."/>
            <person name="Jin Q."/>
        </authorList>
    </citation>
    <scope>NUCLEOTIDE SEQUENCE [LARGE SCALE GENOMIC DNA]</scope>
    <source>
        <strain>8401</strain>
    </source>
</reference>
<proteinExistence type="inferred from homology"/>
<dbReference type="EMBL" id="CP000266">
    <property type="protein sequence ID" value="ABF02379.1"/>
    <property type="molecule type" value="Genomic_DNA"/>
</dbReference>
<dbReference type="RefSeq" id="WP_000005042.1">
    <property type="nucleotide sequence ID" value="NC_008258.1"/>
</dbReference>
<dbReference type="SMR" id="Q0T897"/>
<dbReference type="GeneID" id="93777334"/>
<dbReference type="KEGG" id="sfv:SFV_0093"/>
<dbReference type="HOGENOM" id="CLU_178280_3_1_6"/>
<dbReference type="Proteomes" id="UP000000659">
    <property type="component" value="Chromosome"/>
</dbReference>
<dbReference type="GO" id="GO:0008657">
    <property type="term" value="F:DNA topoisomerase type II (double strand cut, ATP-hydrolyzing) inhibitor activity"/>
    <property type="evidence" value="ECO:0007669"/>
    <property type="project" value="UniProtKB-UniRule"/>
</dbReference>
<dbReference type="GO" id="GO:0008270">
    <property type="term" value="F:zinc ion binding"/>
    <property type="evidence" value="ECO:0007669"/>
    <property type="project" value="UniProtKB-UniRule"/>
</dbReference>
<dbReference type="GO" id="GO:0006355">
    <property type="term" value="P:regulation of DNA-templated transcription"/>
    <property type="evidence" value="ECO:0007669"/>
    <property type="project" value="InterPro"/>
</dbReference>
<dbReference type="FunFam" id="3.30.50.10:FF:000026">
    <property type="entry name" value="DNA gyrase inhibitor YacG"/>
    <property type="match status" value="1"/>
</dbReference>
<dbReference type="Gene3D" id="3.30.50.10">
    <property type="entry name" value="Erythroid Transcription Factor GATA-1, subunit A"/>
    <property type="match status" value="1"/>
</dbReference>
<dbReference type="HAMAP" id="MF_00649">
    <property type="entry name" value="DNA_gyrase_inhibitor_YacG"/>
    <property type="match status" value="1"/>
</dbReference>
<dbReference type="InterPro" id="IPR005584">
    <property type="entry name" value="DNA_gyrase_inhibitor_YacG"/>
</dbReference>
<dbReference type="InterPro" id="IPR013088">
    <property type="entry name" value="Znf_NHR/GATA"/>
</dbReference>
<dbReference type="NCBIfam" id="NF001638">
    <property type="entry name" value="PRK00418.1"/>
    <property type="match status" value="1"/>
</dbReference>
<dbReference type="PANTHER" id="PTHR36150">
    <property type="entry name" value="DNA GYRASE INHIBITOR YACG"/>
    <property type="match status" value="1"/>
</dbReference>
<dbReference type="PANTHER" id="PTHR36150:SF1">
    <property type="entry name" value="DNA GYRASE INHIBITOR YACG"/>
    <property type="match status" value="1"/>
</dbReference>
<dbReference type="Pfam" id="PF03884">
    <property type="entry name" value="YacG"/>
    <property type="match status" value="1"/>
</dbReference>
<dbReference type="SUPFAM" id="SSF57716">
    <property type="entry name" value="Glucocorticoid receptor-like (DNA-binding domain)"/>
    <property type="match status" value="1"/>
</dbReference>
<organism>
    <name type="scientific">Shigella flexneri serotype 5b (strain 8401)</name>
    <dbReference type="NCBI Taxonomy" id="373384"/>
    <lineage>
        <taxon>Bacteria</taxon>
        <taxon>Pseudomonadati</taxon>
        <taxon>Pseudomonadota</taxon>
        <taxon>Gammaproteobacteria</taxon>
        <taxon>Enterobacterales</taxon>
        <taxon>Enterobacteriaceae</taxon>
        <taxon>Shigella</taxon>
    </lineage>
</organism>
<name>YACG_SHIF8</name>